<gene>
    <name type="primary">mrp</name>
    <name type="ordered locus">RP121</name>
</gene>
<proteinExistence type="inferred from homology"/>
<accession>Q9ZE27</accession>
<reference key="1">
    <citation type="journal article" date="1998" name="Nature">
        <title>The genome sequence of Rickettsia prowazekii and the origin of mitochondria.</title>
        <authorList>
            <person name="Andersson S.G.E."/>
            <person name="Zomorodipour A."/>
            <person name="Andersson J.O."/>
            <person name="Sicheritz-Ponten T."/>
            <person name="Alsmark U.C.M."/>
            <person name="Podowski R.M."/>
            <person name="Naeslund A.K."/>
            <person name="Eriksson A.-S."/>
            <person name="Winkler H.H."/>
            <person name="Kurland C.G."/>
        </authorList>
    </citation>
    <scope>NUCLEOTIDE SEQUENCE [LARGE SCALE GENOMIC DNA]</scope>
    <source>
        <strain>Madrid E</strain>
    </source>
</reference>
<organism>
    <name type="scientific">Rickettsia prowazekii (strain Madrid E)</name>
    <dbReference type="NCBI Taxonomy" id="272947"/>
    <lineage>
        <taxon>Bacteria</taxon>
        <taxon>Pseudomonadati</taxon>
        <taxon>Pseudomonadota</taxon>
        <taxon>Alphaproteobacteria</taxon>
        <taxon>Rickettsiales</taxon>
        <taxon>Rickettsiaceae</taxon>
        <taxon>Rickettsieae</taxon>
        <taxon>Rickettsia</taxon>
        <taxon>typhus group</taxon>
    </lineage>
</organism>
<comment type="function">
    <text evidence="1">Binds and transfers iron-sulfur (Fe-S) clusters to target apoproteins. Can hydrolyze ATP.</text>
</comment>
<comment type="subunit">
    <text evidence="1">Homodimer.</text>
</comment>
<comment type="similarity">
    <text evidence="1">Belongs to the Mrp/NBP35 ATP-binding proteins family.</text>
</comment>
<protein>
    <recommendedName>
        <fullName evidence="1">Iron-sulfur cluster carrier protein</fullName>
    </recommendedName>
</protein>
<name>APBC_RICPR</name>
<evidence type="ECO:0000255" key="1">
    <source>
        <dbReference type="HAMAP-Rule" id="MF_02040"/>
    </source>
</evidence>
<keyword id="KW-0067">ATP-binding</keyword>
<keyword id="KW-0378">Hydrolase</keyword>
<keyword id="KW-0408">Iron</keyword>
<keyword id="KW-0411">Iron-sulfur</keyword>
<keyword id="KW-0479">Metal-binding</keyword>
<keyword id="KW-0547">Nucleotide-binding</keyword>
<keyword id="KW-1185">Reference proteome</keyword>
<feature type="chain" id="PRO_0000184941" description="Iron-sulfur cluster carrier protein">
    <location>
        <begin position="1"/>
        <end position="318"/>
    </location>
</feature>
<feature type="binding site" evidence="1">
    <location>
        <begin position="105"/>
        <end position="112"/>
    </location>
    <ligand>
        <name>ATP</name>
        <dbReference type="ChEBI" id="CHEBI:30616"/>
    </ligand>
</feature>
<dbReference type="EMBL" id="AJ235270">
    <property type="protein sequence ID" value="CAA14590.1"/>
    <property type="molecule type" value="Genomic_DNA"/>
</dbReference>
<dbReference type="PIR" id="G71721">
    <property type="entry name" value="G71721"/>
</dbReference>
<dbReference type="RefSeq" id="NP_220513.1">
    <property type="nucleotide sequence ID" value="NC_000963.1"/>
</dbReference>
<dbReference type="RefSeq" id="WP_004597156.1">
    <property type="nucleotide sequence ID" value="NC_000963.1"/>
</dbReference>
<dbReference type="SMR" id="Q9ZE27"/>
<dbReference type="STRING" id="272947.gene:17555204"/>
<dbReference type="EnsemblBacteria" id="CAA14590">
    <property type="protein sequence ID" value="CAA14590"/>
    <property type="gene ID" value="CAA14590"/>
</dbReference>
<dbReference type="KEGG" id="rpr:RP121"/>
<dbReference type="PATRIC" id="fig|272947.5.peg.123"/>
<dbReference type="eggNOG" id="COG0489">
    <property type="taxonomic scope" value="Bacteria"/>
</dbReference>
<dbReference type="HOGENOM" id="CLU_024839_0_0_5"/>
<dbReference type="OrthoDB" id="9809679at2"/>
<dbReference type="Proteomes" id="UP000002480">
    <property type="component" value="Chromosome"/>
</dbReference>
<dbReference type="GO" id="GO:0051539">
    <property type="term" value="F:4 iron, 4 sulfur cluster binding"/>
    <property type="evidence" value="ECO:0007669"/>
    <property type="project" value="TreeGrafter"/>
</dbReference>
<dbReference type="GO" id="GO:0005524">
    <property type="term" value="F:ATP binding"/>
    <property type="evidence" value="ECO:0007669"/>
    <property type="project" value="UniProtKB-UniRule"/>
</dbReference>
<dbReference type="GO" id="GO:0016887">
    <property type="term" value="F:ATP hydrolysis activity"/>
    <property type="evidence" value="ECO:0007669"/>
    <property type="project" value="UniProtKB-UniRule"/>
</dbReference>
<dbReference type="GO" id="GO:0140663">
    <property type="term" value="F:ATP-dependent FeS chaperone activity"/>
    <property type="evidence" value="ECO:0007669"/>
    <property type="project" value="InterPro"/>
</dbReference>
<dbReference type="GO" id="GO:0046872">
    <property type="term" value="F:metal ion binding"/>
    <property type="evidence" value="ECO:0007669"/>
    <property type="project" value="UniProtKB-KW"/>
</dbReference>
<dbReference type="GO" id="GO:0016226">
    <property type="term" value="P:iron-sulfur cluster assembly"/>
    <property type="evidence" value="ECO:0007669"/>
    <property type="project" value="InterPro"/>
</dbReference>
<dbReference type="CDD" id="cd02037">
    <property type="entry name" value="Mrp_NBP35"/>
    <property type="match status" value="1"/>
</dbReference>
<dbReference type="Gene3D" id="3.40.50.300">
    <property type="entry name" value="P-loop containing nucleotide triphosphate hydrolases"/>
    <property type="match status" value="1"/>
</dbReference>
<dbReference type="HAMAP" id="MF_02040">
    <property type="entry name" value="Mrp_NBP35"/>
    <property type="match status" value="1"/>
</dbReference>
<dbReference type="InterPro" id="IPR000808">
    <property type="entry name" value="Mrp-like_CS"/>
</dbReference>
<dbReference type="InterPro" id="IPR019591">
    <property type="entry name" value="Mrp/NBP35_ATP-bd"/>
</dbReference>
<dbReference type="InterPro" id="IPR044304">
    <property type="entry name" value="NUBPL-like"/>
</dbReference>
<dbReference type="InterPro" id="IPR027417">
    <property type="entry name" value="P-loop_NTPase"/>
</dbReference>
<dbReference type="InterPro" id="IPR033756">
    <property type="entry name" value="YlxH/NBP35"/>
</dbReference>
<dbReference type="PANTHER" id="PTHR42961">
    <property type="entry name" value="IRON-SULFUR PROTEIN NUBPL"/>
    <property type="match status" value="1"/>
</dbReference>
<dbReference type="PANTHER" id="PTHR42961:SF2">
    <property type="entry name" value="IRON-SULFUR PROTEIN NUBPL"/>
    <property type="match status" value="1"/>
</dbReference>
<dbReference type="Pfam" id="PF10609">
    <property type="entry name" value="ParA"/>
    <property type="match status" value="1"/>
</dbReference>
<dbReference type="SUPFAM" id="SSF52540">
    <property type="entry name" value="P-loop containing nucleoside triphosphate hydrolases"/>
    <property type="match status" value="1"/>
</dbReference>
<dbReference type="PROSITE" id="PS01215">
    <property type="entry name" value="MRP"/>
    <property type="match status" value="1"/>
</dbReference>
<sequence length="318" mass="35455">MANLHQQQIIDKIQNITFKDGTFLNEVISDIIIKGNNIGFSIDISGKNKLEAEEIRLKAINKLNNIKEVNKITIVFTQSKTIDKKAQKPKHFVENVKKIILVASGKGGVGKSTISALIAQQLSLENYRVGIVDADIYGPSIPHIFGINGIPKTVEGRIVPILAQNIQIISIGFFVKAHSAIIYRGPMASKIIYQLLSNTRWNNLDYLIIDMPPGTGDIHLSIIENYHLDGVIVVTTQQKISEIDVIRSIDLYRKLGLPILGIIENMIYMLESDHCGYLSKKYHIPLIAQIPIMPQIANACDKSLPLTNLLTLPLEKYL</sequence>